<keyword id="KW-0067">ATP-binding</keyword>
<keyword id="KW-1015">Disulfide bond</keyword>
<keyword id="KW-0496">Mitochondrion</keyword>
<keyword id="KW-0547">Nucleotide-binding</keyword>
<keyword id="KW-1185">Reference proteome</keyword>
<keyword id="KW-0694">RNA-binding</keyword>
<keyword id="KW-0808">Transferase</keyword>
<keyword id="KW-0819">tRNA processing</keyword>
<keyword id="KW-0820">tRNA-binding</keyword>
<feature type="chain" id="PRO_0000349873" description="Mitochondrial tRNA-specific 2-thiouridylase 1">
    <location>
        <begin position="1"/>
        <end position="441"/>
    </location>
</feature>
<feature type="region of interest" description="Interaction with target base in tRNA" evidence="1">
    <location>
        <begin position="96"/>
        <end position="98"/>
    </location>
</feature>
<feature type="region of interest" description="Interaction with tRNA" evidence="1">
    <location>
        <begin position="171"/>
        <end position="173"/>
    </location>
</feature>
<feature type="region of interest" description="Interaction with tRNA" evidence="1">
    <location>
        <begin position="358"/>
        <end position="359"/>
    </location>
</feature>
<feature type="region of interest" description="Disordered" evidence="4">
    <location>
        <begin position="421"/>
        <end position="441"/>
    </location>
</feature>
<feature type="compositionally biased region" description="Polar residues" evidence="4">
    <location>
        <begin position="431"/>
        <end position="441"/>
    </location>
</feature>
<feature type="active site" description="Nucleophile" evidence="1">
    <location>
        <position position="101"/>
    </location>
</feature>
<feature type="active site" description="Cysteine persulfide intermediate" evidence="1">
    <location>
        <position position="222"/>
    </location>
</feature>
<feature type="binding site" evidence="1">
    <location>
        <begin position="10"/>
        <end position="17"/>
    </location>
    <ligand>
        <name>ATP</name>
        <dbReference type="ChEBI" id="CHEBI:30616"/>
    </ligand>
</feature>
<feature type="binding site" evidence="1">
    <location>
        <position position="36"/>
    </location>
    <ligand>
        <name>ATP</name>
        <dbReference type="ChEBI" id="CHEBI:30616"/>
    </ligand>
</feature>
<feature type="binding site" evidence="1">
    <location>
        <position position="126"/>
    </location>
    <ligand>
        <name>ATP</name>
        <dbReference type="ChEBI" id="CHEBI:30616"/>
    </ligand>
</feature>
<feature type="site" description="Interaction with tRNA" evidence="1">
    <location>
        <position position="127"/>
    </location>
</feature>
<feature type="site" description="Interaction with tRNA" evidence="1">
    <location>
        <position position="291"/>
    </location>
</feature>
<feature type="site" description="Interaction with tRNA" evidence="1">
    <location>
        <position position="391"/>
    </location>
</feature>
<feature type="disulfide bond" description="Alternate" evidence="1">
    <location>
        <begin position="101"/>
        <end position="222"/>
    </location>
</feature>
<accession>B1WC37</accession>
<comment type="function">
    <text evidence="2">Catalyzes the 2-thiolation of uridine at the wobble position (U34) of mitochondrial tRNA(Lys), tRNA(Glu) and tRNA(Gln). Required for the formation of 5-taurinomethyl-2-thiouridine (tm5s2U) of mitochondrial tRNA(Lys), tRNA(Glu), and tRNA(Gln) at the wobble position. ATP is required to activate the C2 atom of the wobble base.</text>
</comment>
<comment type="catalytic activity">
    <reaction evidence="3">
        <text>5-taurinomethyluridine(34) in tRNA + S-sulfanyl-L-cysteinyl-[protein] + AH2 + ATP = 5-taurinomethyl-2-thiouridine(34) in tRNA + L-cysteinyl-[protein] + A + AMP + diphosphate + H(+)</text>
        <dbReference type="Rhea" id="RHEA:47040"/>
        <dbReference type="Rhea" id="RHEA-COMP:10131"/>
        <dbReference type="Rhea" id="RHEA-COMP:11726"/>
        <dbReference type="Rhea" id="RHEA-COMP:11732"/>
        <dbReference type="Rhea" id="RHEA-COMP:11733"/>
        <dbReference type="ChEBI" id="CHEBI:13193"/>
        <dbReference type="ChEBI" id="CHEBI:15378"/>
        <dbReference type="ChEBI" id="CHEBI:17499"/>
        <dbReference type="ChEBI" id="CHEBI:29950"/>
        <dbReference type="ChEBI" id="CHEBI:30616"/>
        <dbReference type="ChEBI" id="CHEBI:33019"/>
        <dbReference type="ChEBI" id="CHEBI:61963"/>
        <dbReference type="ChEBI" id="CHEBI:87171"/>
        <dbReference type="ChEBI" id="CHEBI:87172"/>
        <dbReference type="ChEBI" id="CHEBI:456215"/>
        <dbReference type="EC" id="2.8.1.14"/>
    </reaction>
</comment>
<comment type="subcellular location">
    <subcellularLocation>
        <location evidence="1">Mitochondrion</location>
    </subcellularLocation>
</comment>
<comment type="miscellaneous">
    <text evidence="1">During the reaction, ATP is used to activate the C2 atom of U34 by adenylation. After this, the persulfide sulfur on the catalytic cysteine is transferred to the C2 atom of the wobble base (U34) of mitochondrial tRNA(Lys), tRNA(Glu) and tRNA(Gln). The reaction probably involves hydrogen sulfide that is generated from the persulfide intermediate and that acts as a nucleophile towards the activated C2 atom on U34. Subsequently, a transient disulfide bond is formed between the two active site cysteine residues (By similarity).</text>
</comment>
<comment type="similarity">
    <text evidence="5">Belongs to the MnmA/TRMU family.</text>
</comment>
<name>MTU1_RAT</name>
<sequence length="441" mass="49724">MSALRHVVCALSGGVDSAVAALLLRRRGYQVTGVFMKNWDSLDEQGICAADKDCEDAYKVCQILDIPFHQVSYVKEYWNDVFSDFLNEYEKGRTPNPDISCNKHIKFSCFHHYAVDNLGADAVATGHYARTSLEDEEVFEQKHTKRPDGLFRNRFEVRNPVKLLQAADSFKDQTFFLSQVSQDALRRTIFPLGELTKDFVKKIAAENRLHHVLQKKESMGICFIGKRNLEHFLLQVSVSDVSGGLLWAGAPVVMKPVFQYLQPRPGKFISIEDNRVLGTHKGWFLYTLGQRAKISGLSEPWYVVEKDGTKGDVLVAPRVDHPALYRDLLRTNRVHWIAEEPPAALVRDKMMECHFRFRHQMALVPCVLTLNQDGTVWVTAVKAVRGLALGQFAVFYKGEECLGSGKILRLGPSAYTLQKGKNRTRVAPEVSSDSPGLHPTS</sequence>
<proteinExistence type="evidence at transcript level"/>
<protein>
    <recommendedName>
        <fullName>Mitochondrial tRNA-specific 2-thiouridylase 1</fullName>
        <ecNumber evidence="3">2.8.1.14</ecNumber>
    </recommendedName>
</protein>
<gene>
    <name type="primary">Trmu</name>
    <name type="synonym">Mtu1</name>
</gene>
<dbReference type="EC" id="2.8.1.14" evidence="3"/>
<dbReference type="EMBL" id="BC161991">
    <property type="protein sequence ID" value="AAI61991.1"/>
    <property type="molecule type" value="mRNA"/>
</dbReference>
<dbReference type="RefSeq" id="NP_001388104.1">
    <property type="nucleotide sequence ID" value="NM_001401175.1"/>
</dbReference>
<dbReference type="RefSeq" id="XP_006242226.1">
    <property type="nucleotide sequence ID" value="XM_006242164.3"/>
</dbReference>
<dbReference type="SMR" id="B1WC37"/>
<dbReference type="FunCoup" id="B1WC37">
    <property type="interactions" value="1788"/>
</dbReference>
<dbReference type="STRING" id="10116.ENSRNOP00000061254"/>
<dbReference type="iPTMnet" id="B1WC37"/>
<dbReference type="PhosphoSitePlus" id="B1WC37"/>
<dbReference type="PaxDb" id="10116-ENSRNOP00000061254"/>
<dbReference type="PeptideAtlas" id="B1WC37"/>
<dbReference type="Ensembl" id="ENSRNOT00000065283.4">
    <property type="protein sequence ID" value="ENSRNOP00000061254.1"/>
    <property type="gene ID" value="ENSRNOG00000016465.8"/>
</dbReference>
<dbReference type="GeneID" id="362976"/>
<dbReference type="AGR" id="RGD:1311229"/>
<dbReference type="RGD" id="1311229">
    <property type="gene designation" value="Trmu"/>
</dbReference>
<dbReference type="eggNOG" id="KOG2805">
    <property type="taxonomic scope" value="Eukaryota"/>
</dbReference>
<dbReference type="GeneTree" id="ENSGT00390000014323"/>
<dbReference type="HOGENOM" id="CLU_035188_1_1_1"/>
<dbReference type="InParanoid" id="B1WC37"/>
<dbReference type="OMA" id="PFYVWDL"/>
<dbReference type="OrthoDB" id="3685at2759"/>
<dbReference type="PhylomeDB" id="B1WC37"/>
<dbReference type="TreeFam" id="TF105611"/>
<dbReference type="PRO" id="PR:B1WC37"/>
<dbReference type="Proteomes" id="UP000002494">
    <property type="component" value="Chromosome 7"/>
</dbReference>
<dbReference type="Bgee" id="ENSRNOG00000016465">
    <property type="expression patterns" value="Expressed in pancreas and 20 other cell types or tissues"/>
</dbReference>
<dbReference type="ExpressionAtlas" id="B1WC37">
    <property type="expression patterns" value="baseline and differential"/>
</dbReference>
<dbReference type="GO" id="GO:0005739">
    <property type="term" value="C:mitochondrion"/>
    <property type="evidence" value="ECO:0000266"/>
    <property type="project" value="RGD"/>
</dbReference>
<dbReference type="GO" id="GO:0005524">
    <property type="term" value="F:ATP binding"/>
    <property type="evidence" value="ECO:0007669"/>
    <property type="project" value="UniProtKB-KW"/>
</dbReference>
<dbReference type="GO" id="GO:0000049">
    <property type="term" value="F:tRNA binding"/>
    <property type="evidence" value="ECO:0007669"/>
    <property type="project" value="UniProtKB-KW"/>
</dbReference>
<dbReference type="GO" id="GO:0061708">
    <property type="term" value="F:tRNA-5-taurinomethyluridine 2-sulfurtransferase"/>
    <property type="evidence" value="ECO:0007669"/>
    <property type="project" value="UniProtKB-EC"/>
</dbReference>
<dbReference type="GO" id="GO:0002143">
    <property type="term" value="P:tRNA wobble position uridine thiolation"/>
    <property type="evidence" value="ECO:0000318"/>
    <property type="project" value="GO_Central"/>
</dbReference>
<dbReference type="CDD" id="cd01998">
    <property type="entry name" value="MnmA_TRMU-like"/>
    <property type="match status" value="1"/>
</dbReference>
<dbReference type="FunFam" id="2.40.30.10:FF:000057">
    <property type="entry name" value="Mitochondrial tRNA-specific 2-thiouridylase 1"/>
    <property type="match status" value="1"/>
</dbReference>
<dbReference type="FunFam" id="3.40.50.620:FF:000104">
    <property type="entry name" value="Mitochondrial tRNA-specific 2-thiouridylase 1"/>
    <property type="match status" value="1"/>
</dbReference>
<dbReference type="FunFam" id="2.30.30.280:FF:000001">
    <property type="entry name" value="tRNA-specific 2-thiouridylase MnmA"/>
    <property type="match status" value="1"/>
</dbReference>
<dbReference type="Gene3D" id="2.30.30.280">
    <property type="entry name" value="Adenine nucleotide alpha hydrolases-like domains"/>
    <property type="match status" value="1"/>
</dbReference>
<dbReference type="Gene3D" id="3.40.50.620">
    <property type="entry name" value="HUPs"/>
    <property type="match status" value="1"/>
</dbReference>
<dbReference type="Gene3D" id="2.40.30.10">
    <property type="entry name" value="Translation factors"/>
    <property type="match status" value="1"/>
</dbReference>
<dbReference type="HAMAP" id="MF_00144">
    <property type="entry name" value="tRNA_thiouridyl_MnmA"/>
    <property type="match status" value="1"/>
</dbReference>
<dbReference type="InterPro" id="IPR004506">
    <property type="entry name" value="MnmA-like"/>
</dbReference>
<dbReference type="InterPro" id="IPR046885">
    <property type="entry name" value="MnmA-like_C"/>
</dbReference>
<dbReference type="InterPro" id="IPR046884">
    <property type="entry name" value="MnmA-like_central"/>
</dbReference>
<dbReference type="InterPro" id="IPR023382">
    <property type="entry name" value="MnmA-like_central_sf"/>
</dbReference>
<dbReference type="InterPro" id="IPR014729">
    <property type="entry name" value="Rossmann-like_a/b/a_fold"/>
</dbReference>
<dbReference type="NCBIfam" id="NF001138">
    <property type="entry name" value="PRK00143.1"/>
    <property type="match status" value="1"/>
</dbReference>
<dbReference type="PANTHER" id="PTHR11933:SF5">
    <property type="entry name" value="MITOCHONDRIAL TRNA-SPECIFIC 2-THIOURIDYLASE 1"/>
    <property type="match status" value="1"/>
</dbReference>
<dbReference type="PANTHER" id="PTHR11933">
    <property type="entry name" value="TRNA 5-METHYLAMINOMETHYL-2-THIOURIDYLATE -METHYLTRANSFERASE"/>
    <property type="match status" value="1"/>
</dbReference>
<dbReference type="Pfam" id="PF03054">
    <property type="entry name" value="tRNA_Me_trans"/>
    <property type="match status" value="1"/>
</dbReference>
<dbReference type="Pfam" id="PF20258">
    <property type="entry name" value="tRNA_Me_trans_C"/>
    <property type="match status" value="1"/>
</dbReference>
<dbReference type="Pfam" id="PF20259">
    <property type="entry name" value="tRNA_Me_trans_M"/>
    <property type="match status" value="1"/>
</dbReference>
<dbReference type="SUPFAM" id="SSF52402">
    <property type="entry name" value="Adenine nucleotide alpha hydrolases-like"/>
    <property type="match status" value="1"/>
</dbReference>
<evidence type="ECO:0000250" key="1"/>
<evidence type="ECO:0000250" key="2">
    <source>
        <dbReference type="UniProtKB" id="O75648"/>
    </source>
</evidence>
<evidence type="ECO:0000250" key="3">
    <source>
        <dbReference type="UniProtKB" id="Q12093"/>
    </source>
</evidence>
<evidence type="ECO:0000256" key="4">
    <source>
        <dbReference type="SAM" id="MobiDB-lite"/>
    </source>
</evidence>
<evidence type="ECO:0000305" key="5"/>
<organism>
    <name type="scientific">Rattus norvegicus</name>
    <name type="common">Rat</name>
    <dbReference type="NCBI Taxonomy" id="10116"/>
    <lineage>
        <taxon>Eukaryota</taxon>
        <taxon>Metazoa</taxon>
        <taxon>Chordata</taxon>
        <taxon>Craniata</taxon>
        <taxon>Vertebrata</taxon>
        <taxon>Euteleostomi</taxon>
        <taxon>Mammalia</taxon>
        <taxon>Eutheria</taxon>
        <taxon>Euarchontoglires</taxon>
        <taxon>Glires</taxon>
        <taxon>Rodentia</taxon>
        <taxon>Myomorpha</taxon>
        <taxon>Muroidea</taxon>
        <taxon>Muridae</taxon>
        <taxon>Murinae</taxon>
        <taxon>Rattus</taxon>
    </lineage>
</organism>
<reference key="1">
    <citation type="journal article" date="2004" name="Genome Res.">
        <title>The status, quality, and expansion of the NIH full-length cDNA project: the Mammalian Gene Collection (MGC).</title>
        <authorList>
            <consortium name="The MGC Project Team"/>
        </authorList>
    </citation>
    <scope>NUCLEOTIDE SEQUENCE [LARGE SCALE MRNA]</scope>
    <source>
        <tissue>Heart</tissue>
    </source>
</reference>